<gene>
    <name type="primary">rcbA</name>
    <name type="synonym">rad23</name>
    <name type="ORF">DDB_G0286357</name>
</gene>
<accession>Q54LV1</accession>
<accession>O97135</accession>
<reference key="1">
    <citation type="submission" date="1998-11" db="EMBL/GenBank/DDBJ databases">
        <title>rcbA, the Dictyostelium discoideum homolog of yeast repair gene RAD23.</title>
        <authorList>
            <person name="Li G."/>
            <person name="Alexander H."/>
            <person name="Alexander S."/>
        </authorList>
    </citation>
    <scope>NUCLEOTIDE SEQUENCE [MRNA]</scope>
    <source>
        <strain>AX4</strain>
    </source>
</reference>
<reference key="2">
    <citation type="journal article" date="2005" name="Nature">
        <title>The genome of the social amoeba Dictyostelium discoideum.</title>
        <authorList>
            <person name="Eichinger L."/>
            <person name="Pachebat J.A."/>
            <person name="Gloeckner G."/>
            <person name="Rajandream M.A."/>
            <person name="Sucgang R."/>
            <person name="Berriman M."/>
            <person name="Song J."/>
            <person name="Olsen R."/>
            <person name="Szafranski K."/>
            <person name="Xu Q."/>
            <person name="Tunggal B."/>
            <person name="Kummerfeld S."/>
            <person name="Madera M."/>
            <person name="Konfortov B.A."/>
            <person name="Rivero F."/>
            <person name="Bankier A.T."/>
            <person name="Lehmann R."/>
            <person name="Hamlin N."/>
            <person name="Davies R."/>
            <person name="Gaudet P."/>
            <person name="Fey P."/>
            <person name="Pilcher K."/>
            <person name="Chen G."/>
            <person name="Saunders D."/>
            <person name="Sodergren E.J."/>
            <person name="Davis P."/>
            <person name="Kerhornou A."/>
            <person name="Nie X."/>
            <person name="Hall N."/>
            <person name="Anjard C."/>
            <person name="Hemphill L."/>
            <person name="Bason N."/>
            <person name="Farbrother P."/>
            <person name="Desany B."/>
            <person name="Just E."/>
            <person name="Morio T."/>
            <person name="Rost R."/>
            <person name="Churcher C.M."/>
            <person name="Cooper J."/>
            <person name="Haydock S."/>
            <person name="van Driessche N."/>
            <person name="Cronin A."/>
            <person name="Goodhead I."/>
            <person name="Muzny D.M."/>
            <person name="Mourier T."/>
            <person name="Pain A."/>
            <person name="Lu M."/>
            <person name="Harper D."/>
            <person name="Lindsay R."/>
            <person name="Hauser H."/>
            <person name="James K.D."/>
            <person name="Quiles M."/>
            <person name="Madan Babu M."/>
            <person name="Saito T."/>
            <person name="Buchrieser C."/>
            <person name="Wardroper A."/>
            <person name="Felder M."/>
            <person name="Thangavelu M."/>
            <person name="Johnson D."/>
            <person name="Knights A."/>
            <person name="Loulseged H."/>
            <person name="Mungall K.L."/>
            <person name="Oliver K."/>
            <person name="Price C."/>
            <person name="Quail M.A."/>
            <person name="Urushihara H."/>
            <person name="Hernandez J."/>
            <person name="Rabbinowitsch E."/>
            <person name="Steffen D."/>
            <person name="Sanders M."/>
            <person name="Ma J."/>
            <person name="Kohara Y."/>
            <person name="Sharp S."/>
            <person name="Simmonds M.N."/>
            <person name="Spiegler S."/>
            <person name="Tivey A."/>
            <person name="Sugano S."/>
            <person name="White B."/>
            <person name="Walker D."/>
            <person name="Woodward J.R."/>
            <person name="Winckler T."/>
            <person name="Tanaka Y."/>
            <person name="Shaulsky G."/>
            <person name="Schleicher M."/>
            <person name="Weinstock G.M."/>
            <person name="Rosenthal A."/>
            <person name="Cox E.C."/>
            <person name="Chisholm R.L."/>
            <person name="Gibbs R.A."/>
            <person name="Loomis W.F."/>
            <person name="Platzer M."/>
            <person name="Kay R.R."/>
            <person name="Williams J.G."/>
            <person name="Dear P.H."/>
            <person name="Noegel A.A."/>
            <person name="Barrell B.G."/>
            <person name="Kuspa A."/>
        </authorList>
    </citation>
    <scope>NUCLEOTIDE SEQUENCE [LARGE SCALE GENOMIC DNA]</scope>
    <source>
        <strain>AX4</strain>
    </source>
</reference>
<reference key="3">
    <citation type="journal article" date="2006" name="Mol. Cell. Proteomics">
        <title>Proteomics fingerprinting of phagosome maturation and evidence for the role of a Galpha during uptake.</title>
        <authorList>
            <person name="Gotthardt D."/>
            <person name="Blancheteau V."/>
            <person name="Bosserhoff A."/>
            <person name="Ruppert T."/>
            <person name="Delorenzi M."/>
            <person name="Soldati T."/>
        </authorList>
    </citation>
    <scope>IDENTIFICATION BY MASS SPECTROMETRY [LARGE SCALE ANALYSIS]</scope>
    <source>
        <strain>AX2</strain>
    </source>
</reference>
<name>RAD23_DICDI</name>
<feature type="chain" id="PRO_0000327863" description="UV excision repair protein RAD23 homolog">
    <location>
        <begin position="1"/>
        <end position="342"/>
    </location>
</feature>
<feature type="domain" description="Ubiquitin-like" evidence="3">
    <location>
        <begin position="1"/>
        <end position="76"/>
    </location>
</feature>
<feature type="domain" description="UBA 1" evidence="2">
    <location>
        <begin position="161"/>
        <end position="201"/>
    </location>
</feature>
<feature type="domain" description="UBA 2" evidence="2">
    <location>
        <begin position="297"/>
        <end position="338"/>
    </location>
</feature>
<feature type="region of interest" description="Disordered" evidence="4">
    <location>
        <begin position="77"/>
        <end position="157"/>
    </location>
</feature>
<feature type="compositionally biased region" description="Low complexity" evidence="4">
    <location>
        <begin position="77"/>
        <end position="151"/>
    </location>
</feature>
<organism>
    <name type="scientific">Dictyostelium discoideum</name>
    <name type="common">Social amoeba</name>
    <dbReference type="NCBI Taxonomy" id="44689"/>
    <lineage>
        <taxon>Eukaryota</taxon>
        <taxon>Amoebozoa</taxon>
        <taxon>Evosea</taxon>
        <taxon>Eumycetozoa</taxon>
        <taxon>Dictyostelia</taxon>
        <taxon>Dictyosteliales</taxon>
        <taxon>Dictyosteliaceae</taxon>
        <taxon>Dictyostelium</taxon>
    </lineage>
</organism>
<sequence length="342" mass="37044">MKVTIKNINKEIYVFEVNGDLTVAELKNLISEKHNQTPSWQTLIYSGKILEDKRTLESYNITDSGFIVMMIKKPREAPATTPAPSTTPAPSTTSAPTTTTTAEPTPTTSSTNNTSTTTPTSVPTPTNNTPATPNPTPTTSSTPGSTSTTSPQQSSDFATGTELEATIKNITDMGFARDQVLRALRLTFNNAERAIEYLVSGNIPAANDPEDEEEMEGGGGSGDNPFEALRNHPHFNLLREAISKNPSIIPGILQQLAQTNPALVRQIQENPNEFIRLFQGDGNPGGNPGQFTLQVTQEESEAIQRLQALTGMDKSTVIEAYFACDKNEELTASYLFETADDE</sequence>
<protein>
    <recommendedName>
        <fullName>UV excision repair protein RAD23 homolog</fullName>
    </recommendedName>
    <alternativeName>
        <fullName>repC-binding protein A</fullName>
    </alternativeName>
</protein>
<dbReference type="EMBL" id="AF103870">
    <property type="protein sequence ID" value="AAD17913.1"/>
    <property type="status" value="ALT_FRAME"/>
    <property type="molecule type" value="mRNA"/>
</dbReference>
<dbReference type="EMBL" id="AAFI02000085">
    <property type="protein sequence ID" value="EAL64203.1"/>
    <property type="molecule type" value="Genomic_DNA"/>
</dbReference>
<dbReference type="RefSeq" id="XP_637729.1">
    <property type="nucleotide sequence ID" value="XM_632637.1"/>
</dbReference>
<dbReference type="SMR" id="Q54LV1"/>
<dbReference type="FunCoup" id="Q54LV1">
    <property type="interactions" value="964"/>
</dbReference>
<dbReference type="STRING" id="44689.Q54LV1"/>
<dbReference type="GlyGen" id="Q54LV1">
    <property type="glycosylation" value="4 sites"/>
</dbReference>
<dbReference type="PaxDb" id="44689-DDB0191177"/>
<dbReference type="EnsemblProtists" id="EAL64203">
    <property type="protein sequence ID" value="EAL64203"/>
    <property type="gene ID" value="DDB_G0286357"/>
</dbReference>
<dbReference type="GeneID" id="8625594"/>
<dbReference type="KEGG" id="ddi:DDB_G0286357"/>
<dbReference type="dictyBase" id="DDB_G0286357">
    <property type="gene designation" value="rcbA"/>
</dbReference>
<dbReference type="VEuPathDB" id="AmoebaDB:DDB_G0286357"/>
<dbReference type="eggNOG" id="KOG0011">
    <property type="taxonomic scope" value="Eukaryota"/>
</dbReference>
<dbReference type="HOGENOM" id="CLU_040364_0_0_1"/>
<dbReference type="InParanoid" id="Q54LV1"/>
<dbReference type="OMA" id="PHMLEPI"/>
<dbReference type="PhylomeDB" id="Q54LV1"/>
<dbReference type="Reactome" id="R-DDI-5696394">
    <property type="pathway name" value="DNA Damage Recognition in GG-NER"/>
</dbReference>
<dbReference type="Reactome" id="R-DDI-5696395">
    <property type="pathway name" value="Formation of Incision Complex in GG-NER"/>
</dbReference>
<dbReference type="PRO" id="PR:Q54LV1"/>
<dbReference type="Proteomes" id="UP000002195">
    <property type="component" value="Chromosome 4"/>
</dbReference>
<dbReference type="GO" id="GO:0005829">
    <property type="term" value="C:cytosol"/>
    <property type="evidence" value="ECO:0000318"/>
    <property type="project" value="GO_Central"/>
</dbReference>
<dbReference type="GO" id="GO:0005654">
    <property type="term" value="C:nucleoplasm"/>
    <property type="evidence" value="ECO:0000318"/>
    <property type="project" value="GO_Central"/>
</dbReference>
<dbReference type="GO" id="GO:0045335">
    <property type="term" value="C:phagocytic vesicle"/>
    <property type="evidence" value="ECO:0007005"/>
    <property type="project" value="dictyBase"/>
</dbReference>
<dbReference type="GO" id="GO:0003684">
    <property type="term" value="F:damaged DNA binding"/>
    <property type="evidence" value="ECO:0007669"/>
    <property type="project" value="InterPro"/>
</dbReference>
<dbReference type="GO" id="GO:0031593">
    <property type="term" value="F:polyubiquitin modification-dependent protein binding"/>
    <property type="evidence" value="ECO:0000318"/>
    <property type="project" value="GO_Central"/>
</dbReference>
<dbReference type="GO" id="GO:0070628">
    <property type="term" value="F:proteasome binding"/>
    <property type="evidence" value="ECO:0000318"/>
    <property type="project" value="GO_Central"/>
</dbReference>
<dbReference type="GO" id="GO:0043130">
    <property type="term" value="F:ubiquitin binding"/>
    <property type="evidence" value="ECO:0000318"/>
    <property type="project" value="GO_Central"/>
</dbReference>
<dbReference type="GO" id="GO:0006289">
    <property type="term" value="P:nucleotide-excision repair"/>
    <property type="evidence" value="ECO:0007669"/>
    <property type="project" value="InterPro"/>
</dbReference>
<dbReference type="GO" id="GO:0043161">
    <property type="term" value="P:proteasome-mediated ubiquitin-dependent protein catabolic process"/>
    <property type="evidence" value="ECO:0000318"/>
    <property type="project" value="GO_Central"/>
</dbReference>
<dbReference type="CDD" id="cd14280">
    <property type="entry name" value="UBA1_Rad23_like"/>
    <property type="match status" value="1"/>
</dbReference>
<dbReference type="CDD" id="cd14281">
    <property type="entry name" value="UBA2_Rad23_like"/>
    <property type="match status" value="1"/>
</dbReference>
<dbReference type="CDD" id="cd01805">
    <property type="entry name" value="Ubl_Rad23"/>
    <property type="match status" value="1"/>
</dbReference>
<dbReference type="FunFam" id="1.10.10.540:FF:000002">
    <property type="entry name" value="UV excision repair protein Rad23"/>
    <property type="match status" value="1"/>
</dbReference>
<dbReference type="FunFam" id="1.10.8.10:FF:000002">
    <property type="entry name" value="UV excision repair protein RAD23 homolog"/>
    <property type="match status" value="1"/>
</dbReference>
<dbReference type="FunFam" id="1.10.8.10:FF:000003">
    <property type="entry name" value="UV excision repair protein RAD23 homolog"/>
    <property type="match status" value="1"/>
</dbReference>
<dbReference type="FunFam" id="3.10.20.90:FF:000563">
    <property type="entry name" value="UV excision repair protein RAD23 homolog"/>
    <property type="match status" value="1"/>
</dbReference>
<dbReference type="Gene3D" id="1.10.8.10">
    <property type="entry name" value="DNA helicase RuvA subunit, C-terminal domain"/>
    <property type="match status" value="2"/>
</dbReference>
<dbReference type="Gene3D" id="3.10.20.90">
    <property type="entry name" value="Phosphatidylinositol 3-kinase Catalytic Subunit, Chain A, domain 1"/>
    <property type="match status" value="1"/>
</dbReference>
<dbReference type="Gene3D" id="1.10.10.540">
    <property type="entry name" value="XPC-binding domain"/>
    <property type="match status" value="1"/>
</dbReference>
<dbReference type="InterPro" id="IPR004806">
    <property type="entry name" value="Rad23"/>
</dbReference>
<dbReference type="InterPro" id="IPR006636">
    <property type="entry name" value="STI1_HS-bd"/>
</dbReference>
<dbReference type="InterPro" id="IPR015940">
    <property type="entry name" value="UBA"/>
</dbReference>
<dbReference type="InterPro" id="IPR009060">
    <property type="entry name" value="UBA-like_sf"/>
</dbReference>
<dbReference type="InterPro" id="IPR000626">
    <property type="entry name" value="Ubiquitin-like_dom"/>
</dbReference>
<dbReference type="InterPro" id="IPR029071">
    <property type="entry name" value="Ubiquitin-like_domsf"/>
</dbReference>
<dbReference type="InterPro" id="IPR015360">
    <property type="entry name" value="XPC-bd"/>
</dbReference>
<dbReference type="InterPro" id="IPR036353">
    <property type="entry name" value="XPC-bd_sf"/>
</dbReference>
<dbReference type="PANTHER" id="PTHR10621">
    <property type="entry name" value="UV EXCISION REPAIR PROTEIN RAD23"/>
    <property type="match status" value="1"/>
</dbReference>
<dbReference type="PANTHER" id="PTHR10621:SF0">
    <property type="entry name" value="UV EXCISION REPAIR PROTEIN RAD23"/>
    <property type="match status" value="1"/>
</dbReference>
<dbReference type="Pfam" id="PF00627">
    <property type="entry name" value="UBA"/>
    <property type="match status" value="2"/>
</dbReference>
<dbReference type="Pfam" id="PF00240">
    <property type="entry name" value="ubiquitin"/>
    <property type="match status" value="1"/>
</dbReference>
<dbReference type="Pfam" id="PF09280">
    <property type="entry name" value="XPC-binding"/>
    <property type="match status" value="1"/>
</dbReference>
<dbReference type="PRINTS" id="PR01839">
    <property type="entry name" value="RAD23PROTEIN"/>
</dbReference>
<dbReference type="SMART" id="SM00727">
    <property type="entry name" value="STI1"/>
    <property type="match status" value="1"/>
</dbReference>
<dbReference type="SMART" id="SM00165">
    <property type="entry name" value="UBA"/>
    <property type="match status" value="2"/>
</dbReference>
<dbReference type="SMART" id="SM00213">
    <property type="entry name" value="UBQ"/>
    <property type="match status" value="1"/>
</dbReference>
<dbReference type="SUPFAM" id="SSF46934">
    <property type="entry name" value="UBA-like"/>
    <property type="match status" value="2"/>
</dbReference>
<dbReference type="SUPFAM" id="SSF54236">
    <property type="entry name" value="Ubiquitin-like"/>
    <property type="match status" value="1"/>
</dbReference>
<dbReference type="SUPFAM" id="SSF101238">
    <property type="entry name" value="XPC-binding domain"/>
    <property type="match status" value="1"/>
</dbReference>
<dbReference type="PROSITE" id="PS50030">
    <property type="entry name" value="UBA"/>
    <property type="match status" value="1"/>
</dbReference>
<dbReference type="PROSITE" id="PS50053">
    <property type="entry name" value="UBIQUITIN_2"/>
    <property type="match status" value="1"/>
</dbReference>
<comment type="function">
    <text evidence="1">May play a role both in proteasomal degradation of misfolded proteins and DNA repair.</text>
</comment>
<comment type="subcellular location">
    <subcellularLocation>
        <location evidence="1">Nucleus</location>
    </subcellularLocation>
    <subcellularLocation>
        <location evidence="1">Cytoplasm</location>
    </subcellularLocation>
</comment>
<comment type="similarity">
    <text evidence="5">Belongs to the RAD23 family.</text>
</comment>
<comment type="sequence caution" evidence="5">
    <conflict type="frameshift">
        <sequence resource="EMBL-CDS" id="AAD17913"/>
    </conflict>
</comment>
<keyword id="KW-0963">Cytoplasm</keyword>
<keyword id="KW-0227">DNA damage</keyword>
<keyword id="KW-0234">DNA repair</keyword>
<keyword id="KW-0539">Nucleus</keyword>
<keyword id="KW-1185">Reference proteome</keyword>
<keyword id="KW-0677">Repeat</keyword>
<keyword id="KW-0833">Ubl conjugation pathway</keyword>
<evidence type="ECO:0000250" key="1"/>
<evidence type="ECO:0000255" key="2">
    <source>
        <dbReference type="PROSITE-ProRule" id="PRU00212"/>
    </source>
</evidence>
<evidence type="ECO:0000255" key="3">
    <source>
        <dbReference type="PROSITE-ProRule" id="PRU00214"/>
    </source>
</evidence>
<evidence type="ECO:0000256" key="4">
    <source>
        <dbReference type="SAM" id="MobiDB-lite"/>
    </source>
</evidence>
<evidence type="ECO:0000305" key="5"/>
<proteinExistence type="evidence at protein level"/>